<reference key="1">
    <citation type="journal article" date="2008" name="J. Biotechnol.">
        <title>The genome of Xanthomonas campestris pv. campestris B100 and its use for the reconstruction of metabolic pathways involved in xanthan biosynthesis.</title>
        <authorList>
            <person name="Vorhoelter F.-J."/>
            <person name="Schneiker S."/>
            <person name="Goesmann A."/>
            <person name="Krause L."/>
            <person name="Bekel T."/>
            <person name="Kaiser O."/>
            <person name="Linke B."/>
            <person name="Patschkowski T."/>
            <person name="Rueckert C."/>
            <person name="Schmid J."/>
            <person name="Sidhu V.K."/>
            <person name="Sieber V."/>
            <person name="Tauch A."/>
            <person name="Watt S.A."/>
            <person name="Weisshaar B."/>
            <person name="Becker A."/>
            <person name="Niehaus K."/>
            <person name="Puehler A."/>
        </authorList>
    </citation>
    <scope>NUCLEOTIDE SEQUENCE [LARGE SCALE GENOMIC DNA]</scope>
    <source>
        <strain>B100</strain>
    </source>
</reference>
<feature type="chain" id="PRO_1000190369" description="RNA-binding protein Hfq">
    <location>
        <begin position="1"/>
        <end position="92"/>
    </location>
</feature>
<feature type="domain" description="Sm" evidence="2">
    <location>
        <begin position="9"/>
        <end position="68"/>
    </location>
</feature>
<feature type="region of interest" description="Disordered" evidence="3">
    <location>
        <begin position="72"/>
        <end position="92"/>
    </location>
</feature>
<protein>
    <recommendedName>
        <fullName evidence="1">RNA-binding protein Hfq</fullName>
    </recommendedName>
</protein>
<gene>
    <name evidence="1" type="primary">hfq</name>
    <name type="ordered locus">xcc-b100_2543</name>
</gene>
<evidence type="ECO:0000255" key="1">
    <source>
        <dbReference type="HAMAP-Rule" id="MF_00436"/>
    </source>
</evidence>
<evidence type="ECO:0000255" key="2">
    <source>
        <dbReference type="PROSITE-ProRule" id="PRU01346"/>
    </source>
</evidence>
<evidence type="ECO:0000256" key="3">
    <source>
        <dbReference type="SAM" id="MobiDB-lite"/>
    </source>
</evidence>
<organism>
    <name type="scientific">Xanthomonas campestris pv. campestris (strain B100)</name>
    <dbReference type="NCBI Taxonomy" id="509169"/>
    <lineage>
        <taxon>Bacteria</taxon>
        <taxon>Pseudomonadati</taxon>
        <taxon>Pseudomonadota</taxon>
        <taxon>Gammaproteobacteria</taxon>
        <taxon>Lysobacterales</taxon>
        <taxon>Lysobacteraceae</taxon>
        <taxon>Xanthomonas</taxon>
    </lineage>
</organism>
<dbReference type="EMBL" id="AM920689">
    <property type="protein sequence ID" value="CAP51903.1"/>
    <property type="molecule type" value="Genomic_DNA"/>
</dbReference>
<dbReference type="SMR" id="B0RTY9"/>
<dbReference type="KEGG" id="xca:xcc-b100_2543"/>
<dbReference type="HOGENOM" id="CLU_113688_2_0_6"/>
<dbReference type="Proteomes" id="UP000001188">
    <property type="component" value="Chromosome"/>
</dbReference>
<dbReference type="GO" id="GO:0005829">
    <property type="term" value="C:cytosol"/>
    <property type="evidence" value="ECO:0007669"/>
    <property type="project" value="TreeGrafter"/>
</dbReference>
<dbReference type="GO" id="GO:0003723">
    <property type="term" value="F:RNA binding"/>
    <property type="evidence" value="ECO:0007669"/>
    <property type="project" value="UniProtKB-UniRule"/>
</dbReference>
<dbReference type="GO" id="GO:0006355">
    <property type="term" value="P:regulation of DNA-templated transcription"/>
    <property type="evidence" value="ECO:0007669"/>
    <property type="project" value="InterPro"/>
</dbReference>
<dbReference type="GO" id="GO:0043487">
    <property type="term" value="P:regulation of RNA stability"/>
    <property type="evidence" value="ECO:0007669"/>
    <property type="project" value="TreeGrafter"/>
</dbReference>
<dbReference type="GO" id="GO:0045974">
    <property type="term" value="P:regulation of translation, ncRNA-mediated"/>
    <property type="evidence" value="ECO:0007669"/>
    <property type="project" value="TreeGrafter"/>
</dbReference>
<dbReference type="CDD" id="cd01716">
    <property type="entry name" value="Hfq"/>
    <property type="match status" value="1"/>
</dbReference>
<dbReference type="FunFam" id="2.30.30.100:FF:000001">
    <property type="entry name" value="RNA-binding protein Hfq"/>
    <property type="match status" value="1"/>
</dbReference>
<dbReference type="Gene3D" id="2.30.30.100">
    <property type="match status" value="1"/>
</dbReference>
<dbReference type="HAMAP" id="MF_00436">
    <property type="entry name" value="Hfq"/>
    <property type="match status" value="1"/>
</dbReference>
<dbReference type="InterPro" id="IPR005001">
    <property type="entry name" value="Hfq"/>
</dbReference>
<dbReference type="InterPro" id="IPR010920">
    <property type="entry name" value="LSM_dom_sf"/>
</dbReference>
<dbReference type="InterPro" id="IPR047575">
    <property type="entry name" value="Sm"/>
</dbReference>
<dbReference type="NCBIfam" id="TIGR02383">
    <property type="entry name" value="Hfq"/>
    <property type="match status" value="1"/>
</dbReference>
<dbReference type="NCBIfam" id="NF001602">
    <property type="entry name" value="PRK00395.1"/>
    <property type="match status" value="1"/>
</dbReference>
<dbReference type="PANTHER" id="PTHR34772">
    <property type="entry name" value="RNA-BINDING PROTEIN HFQ"/>
    <property type="match status" value="1"/>
</dbReference>
<dbReference type="PANTHER" id="PTHR34772:SF1">
    <property type="entry name" value="RNA-BINDING PROTEIN HFQ"/>
    <property type="match status" value="1"/>
</dbReference>
<dbReference type="Pfam" id="PF17209">
    <property type="entry name" value="Hfq"/>
    <property type="match status" value="1"/>
</dbReference>
<dbReference type="SUPFAM" id="SSF50182">
    <property type="entry name" value="Sm-like ribonucleoproteins"/>
    <property type="match status" value="1"/>
</dbReference>
<dbReference type="PROSITE" id="PS52002">
    <property type="entry name" value="SM"/>
    <property type="match status" value="1"/>
</dbReference>
<comment type="function">
    <text evidence="1">RNA chaperone that binds small regulatory RNA (sRNAs) and mRNAs to facilitate mRNA translational regulation in response to envelope stress, environmental stress and changes in metabolite concentrations. Also binds with high specificity to tRNAs.</text>
</comment>
<comment type="subunit">
    <text evidence="1">Homohexamer.</text>
</comment>
<comment type="similarity">
    <text evidence="1">Belongs to the Hfq family.</text>
</comment>
<proteinExistence type="inferred from homology"/>
<name>HFQ_XANCB</name>
<accession>B0RTY9</accession>
<sequence>MAKGQSLQDPFLNALRRERVPVSVYLVNGIKLQGTIESFDQFVVLLRNTVSQMVYKHAISTVVPARNVRVGPGGGYVQSNENNQAEDDDVEQ</sequence>
<keyword id="KW-0694">RNA-binding</keyword>
<keyword id="KW-0346">Stress response</keyword>